<proteinExistence type="inferred from homology"/>
<comment type="function">
    <text evidence="1">Involved in the de novo purine biosynthesis. Catalyzes the transfer of formate to 5-phospho-ribosyl-glycinamide (GAR), producing 5-phospho-ribosyl-N-formylglycinamide (FGAR). Formate is provided by PurU via hydrolysis of 10-formyl-tetrahydrofolate.</text>
</comment>
<comment type="catalytic activity">
    <reaction evidence="1">
        <text>N(1)-(5-phospho-beta-D-ribosyl)glycinamide + formate + ATP = N(2)-formyl-N(1)-(5-phospho-beta-D-ribosyl)glycinamide + ADP + phosphate + H(+)</text>
        <dbReference type="Rhea" id="RHEA:24829"/>
        <dbReference type="ChEBI" id="CHEBI:15378"/>
        <dbReference type="ChEBI" id="CHEBI:15740"/>
        <dbReference type="ChEBI" id="CHEBI:30616"/>
        <dbReference type="ChEBI" id="CHEBI:43474"/>
        <dbReference type="ChEBI" id="CHEBI:143788"/>
        <dbReference type="ChEBI" id="CHEBI:147286"/>
        <dbReference type="ChEBI" id="CHEBI:456216"/>
        <dbReference type="EC" id="6.3.1.21"/>
    </reaction>
    <physiologicalReaction direction="left-to-right" evidence="1">
        <dbReference type="Rhea" id="RHEA:24830"/>
    </physiologicalReaction>
</comment>
<comment type="pathway">
    <text evidence="1">Purine metabolism; IMP biosynthesis via de novo pathway; N(2)-formyl-N(1)-(5-phospho-D-ribosyl)glycinamide from N(1)-(5-phospho-D-ribosyl)glycinamide (formate route): step 1/1.</text>
</comment>
<comment type="subunit">
    <text evidence="1">Homodimer.</text>
</comment>
<comment type="similarity">
    <text evidence="1">Belongs to the PurK/PurT family.</text>
</comment>
<name>PURT_VARPS</name>
<sequence length="400" mass="42642">MTTLGTPLSPSATRVMLLGSGELGKEVLIALQRLGVETIAVDRYENAPGQQVAHHARTITMSDPEQLKALIEAEKPTLVVPEIEAIATPMLQQLEDAGVVRVIPTARAARLTMDREGIRRLAAETLGVPTSPYKFCDSLAELQAAIDAGIGYPCIVKPVMSSSGKGQSKIDGPADVQKAWDYAMAGGRVSHGRVIVEGFIDFDYEITLLTVRAKDAAGAVQTRFCEPIGHVQVSGDYVESWQPHPMAPAALQKAQQIAEAVTSDLGGQGLFGVELFVKGDEVWFSEVSPRPHDTGMVTMATQWQNEFELHARAILGLPVDTSLKSPGASAVIYGGVDATGIAFDGVAEALRVPGSDIRLFGKPESFAKRRMGVALVHAADTGTARRLAKDAASRVKPRKA</sequence>
<accession>C5CP83</accession>
<keyword id="KW-0067">ATP-binding</keyword>
<keyword id="KW-0436">Ligase</keyword>
<keyword id="KW-0460">Magnesium</keyword>
<keyword id="KW-0479">Metal-binding</keyword>
<keyword id="KW-0547">Nucleotide-binding</keyword>
<keyword id="KW-0658">Purine biosynthesis</keyword>
<reference key="1">
    <citation type="journal article" date="2011" name="J. Bacteriol.">
        <title>Complete genome sequence of the metabolically versatile plant growth-promoting endophyte, Variovorax paradoxus S110.</title>
        <authorList>
            <person name="Han J.I."/>
            <person name="Choi H.K."/>
            <person name="Lee S.W."/>
            <person name="Orwin P.M."/>
            <person name="Kim J."/>
            <person name="Laroe S.L."/>
            <person name="Kim T.G."/>
            <person name="O'Neil J."/>
            <person name="Leadbetter J.R."/>
            <person name="Lee S.Y."/>
            <person name="Hur C.G."/>
            <person name="Spain J.C."/>
            <person name="Ovchinnikova G."/>
            <person name="Goodwin L."/>
            <person name="Han C."/>
        </authorList>
    </citation>
    <scope>NUCLEOTIDE SEQUENCE [LARGE SCALE GENOMIC DNA]</scope>
    <source>
        <strain>S110</strain>
    </source>
</reference>
<feature type="chain" id="PRO_1000215841" description="Formate-dependent phosphoribosylglycinamide formyltransferase">
    <location>
        <begin position="1"/>
        <end position="400"/>
    </location>
</feature>
<feature type="domain" description="ATP-grasp" evidence="1">
    <location>
        <begin position="120"/>
        <end position="315"/>
    </location>
</feature>
<feature type="binding site" evidence="1">
    <location>
        <begin position="22"/>
        <end position="23"/>
    </location>
    <ligand>
        <name>N(1)-(5-phospho-beta-D-ribosyl)glycinamide</name>
        <dbReference type="ChEBI" id="CHEBI:143788"/>
    </ligand>
</feature>
<feature type="binding site" evidence="1">
    <location>
        <position position="82"/>
    </location>
    <ligand>
        <name>N(1)-(5-phospho-beta-D-ribosyl)glycinamide</name>
        <dbReference type="ChEBI" id="CHEBI:143788"/>
    </ligand>
</feature>
<feature type="binding site" evidence="1">
    <location>
        <position position="115"/>
    </location>
    <ligand>
        <name>ATP</name>
        <dbReference type="ChEBI" id="CHEBI:30616"/>
    </ligand>
</feature>
<feature type="binding site" evidence="1">
    <location>
        <position position="157"/>
    </location>
    <ligand>
        <name>ATP</name>
        <dbReference type="ChEBI" id="CHEBI:30616"/>
    </ligand>
</feature>
<feature type="binding site" evidence="1">
    <location>
        <begin position="162"/>
        <end position="167"/>
    </location>
    <ligand>
        <name>ATP</name>
        <dbReference type="ChEBI" id="CHEBI:30616"/>
    </ligand>
</feature>
<feature type="binding site" evidence="1">
    <location>
        <begin position="197"/>
        <end position="200"/>
    </location>
    <ligand>
        <name>ATP</name>
        <dbReference type="ChEBI" id="CHEBI:30616"/>
    </ligand>
</feature>
<feature type="binding site" evidence="1">
    <location>
        <position position="205"/>
    </location>
    <ligand>
        <name>ATP</name>
        <dbReference type="ChEBI" id="CHEBI:30616"/>
    </ligand>
</feature>
<feature type="binding site" evidence="1">
    <location>
        <position position="274"/>
    </location>
    <ligand>
        <name>Mg(2+)</name>
        <dbReference type="ChEBI" id="CHEBI:18420"/>
    </ligand>
</feature>
<feature type="binding site" evidence="1">
    <location>
        <position position="286"/>
    </location>
    <ligand>
        <name>Mg(2+)</name>
        <dbReference type="ChEBI" id="CHEBI:18420"/>
    </ligand>
</feature>
<feature type="binding site" evidence="1">
    <location>
        <position position="293"/>
    </location>
    <ligand>
        <name>N(1)-(5-phospho-beta-D-ribosyl)glycinamide</name>
        <dbReference type="ChEBI" id="CHEBI:143788"/>
    </ligand>
</feature>
<feature type="binding site" evidence="1">
    <location>
        <position position="362"/>
    </location>
    <ligand>
        <name>N(1)-(5-phospho-beta-D-ribosyl)glycinamide</name>
        <dbReference type="ChEBI" id="CHEBI:143788"/>
    </ligand>
</feature>
<feature type="binding site" evidence="1">
    <location>
        <begin position="369"/>
        <end position="370"/>
    </location>
    <ligand>
        <name>N(1)-(5-phospho-beta-D-ribosyl)glycinamide</name>
        <dbReference type="ChEBI" id="CHEBI:143788"/>
    </ligand>
</feature>
<protein>
    <recommendedName>
        <fullName evidence="1">Formate-dependent phosphoribosylglycinamide formyltransferase</fullName>
        <ecNumber evidence="1">6.3.1.21</ecNumber>
    </recommendedName>
    <alternativeName>
        <fullName evidence="1">5'-phosphoribosylglycinamide transformylase 2</fullName>
    </alternativeName>
    <alternativeName>
        <fullName evidence="1">Formate-dependent GAR transformylase</fullName>
    </alternativeName>
    <alternativeName>
        <fullName evidence="1">GAR transformylase 2</fullName>
        <shortName evidence="1">GART 2</shortName>
    </alternativeName>
    <alternativeName>
        <fullName evidence="1">Non-folate glycinamide ribonucleotide transformylase</fullName>
    </alternativeName>
    <alternativeName>
        <fullName evidence="1">Phosphoribosylglycinamide formyltransferase 2</fullName>
    </alternativeName>
</protein>
<organism>
    <name type="scientific">Variovorax paradoxus (strain S110)</name>
    <dbReference type="NCBI Taxonomy" id="543728"/>
    <lineage>
        <taxon>Bacteria</taxon>
        <taxon>Pseudomonadati</taxon>
        <taxon>Pseudomonadota</taxon>
        <taxon>Betaproteobacteria</taxon>
        <taxon>Burkholderiales</taxon>
        <taxon>Comamonadaceae</taxon>
        <taxon>Variovorax</taxon>
    </lineage>
</organism>
<evidence type="ECO:0000255" key="1">
    <source>
        <dbReference type="HAMAP-Rule" id="MF_01643"/>
    </source>
</evidence>
<gene>
    <name evidence="1" type="primary">purT</name>
    <name type="ordered locus">Vapar_4943</name>
</gene>
<dbReference type="EC" id="6.3.1.21" evidence="1"/>
<dbReference type="EMBL" id="CP001635">
    <property type="protein sequence ID" value="ACS21547.1"/>
    <property type="molecule type" value="Genomic_DNA"/>
</dbReference>
<dbReference type="SMR" id="C5CP83"/>
<dbReference type="STRING" id="543728.Vapar_4943"/>
<dbReference type="KEGG" id="vap:Vapar_4943"/>
<dbReference type="eggNOG" id="COG0027">
    <property type="taxonomic scope" value="Bacteria"/>
</dbReference>
<dbReference type="HOGENOM" id="CLU_011534_1_3_4"/>
<dbReference type="OrthoDB" id="9804625at2"/>
<dbReference type="UniPathway" id="UPA00074">
    <property type="reaction ID" value="UER00127"/>
</dbReference>
<dbReference type="GO" id="GO:0005829">
    <property type="term" value="C:cytosol"/>
    <property type="evidence" value="ECO:0007669"/>
    <property type="project" value="TreeGrafter"/>
</dbReference>
<dbReference type="GO" id="GO:0005524">
    <property type="term" value="F:ATP binding"/>
    <property type="evidence" value="ECO:0007669"/>
    <property type="project" value="UniProtKB-UniRule"/>
</dbReference>
<dbReference type="GO" id="GO:0000287">
    <property type="term" value="F:magnesium ion binding"/>
    <property type="evidence" value="ECO:0007669"/>
    <property type="project" value="InterPro"/>
</dbReference>
<dbReference type="GO" id="GO:0043815">
    <property type="term" value="F:phosphoribosylglycinamide formyltransferase 2 activity"/>
    <property type="evidence" value="ECO:0007669"/>
    <property type="project" value="UniProtKB-UniRule"/>
</dbReference>
<dbReference type="GO" id="GO:0004644">
    <property type="term" value="F:phosphoribosylglycinamide formyltransferase activity"/>
    <property type="evidence" value="ECO:0007669"/>
    <property type="project" value="InterPro"/>
</dbReference>
<dbReference type="GO" id="GO:0006189">
    <property type="term" value="P:'de novo' IMP biosynthetic process"/>
    <property type="evidence" value="ECO:0007669"/>
    <property type="project" value="UniProtKB-UniRule"/>
</dbReference>
<dbReference type="Gene3D" id="3.40.50.20">
    <property type="match status" value="1"/>
</dbReference>
<dbReference type="Gene3D" id="3.30.1490.20">
    <property type="entry name" value="ATP-grasp fold, A domain"/>
    <property type="match status" value="1"/>
</dbReference>
<dbReference type="Gene3D" id="3.30.470.20">
    <property type="entry name" value="ATP-grasp fold, B domain"/>
    <property type="match status" value="1"/>
</dbReference>
<dbReference type="HAMAP" id="MF_01643">
    <property type="entry name" value="PurT"/>
    <property type="match status" value="1"/>
</dbReference>
<dbReference type="InterPro" id="IPR011761">
    <property type="entry name" value="ATP-grasp"/>
</dbReference>
<dbReference type="InterPro" id="IPR003135">
    <property type="entry name" value="ATP-grasp_carboxylate-amine"/>
</dbReference>
<dbReference type="InterPro" id="IPR013815">
    <property type="entry name" value="ATP_grasp_subdomain_1"/>
</dbReference>
<dbReference type="InterPro" id="IPR016185">
    <property type="entry name" value="PreATP-grasp_dom_sf"/>
</dbReference>
<dbReference type="InterPro" id="IPR005862">
    <property type="entry name" value="PurT"/>
</dbReference>
<dbReference type="InterPro" id="IPR054350">
    <property type="entry name" value="PurT/PurK_preATP-grasp"/>
</dbReference>
<dbReference type="InterPro" id="IPR048740">
    <property type="entry name" value="PurT_C"/>
</dbReference>
<dbReference type="InterPro" id="IPR011054">
    <property type="entry name" value="Rudment_hybrid_motif"/>
</dbReference>
<dbReference type="NCBIfam" id="NF006766">
    <property type="entry name" value="PRK09288.1"/>
    <property type="match status" value="1"/>
</dbReference>
<dbReference type="NCBIfam" id="TIGR01142">
    <property type="entry name" value="purT"/>
    <property type="match status" value="1"/>
</dbReference>
<dbReference type="PANTHER" id="PTHR43055">
    <property type="entry name" value="FORMATE-DEPENDENT PHOSPHORIBOSYLGLYCINAMIDE FORMYLTRANSFERASE"/>
    <property type="match status" value="1"/>
</dbReference>
<dbReference type="PANTHER" id="PTHR43055:SF1">
    <property type="entry name" value="FORMATE-DEPENDENT PHOSPHORIBOSYLGLYCINAMIDE FORMYLTRANSFERASE"/>
    <property type="match status" value="1"/>
</dbReference>
<dbReference type="Pfam" id="PF02222">
    <property type="entry name" value="ATP-grasp"/>
    <property type="match status" value="1"/>
</dbReference>
<dbReference type="Pfam" id="PF21244">
    <property type="entry name" value="PurT_C"/>
    <property type="match status" value="1"/>
</dbReference>
<dbReference type="Pfam" id="PF22660">
    <property type="entry name" value="RS_preATP-grasp-like"/>
    <property type="match status" value="1"/>
</dbReference>
<dbReference type="SUPFAM" id="SSF56059">
    <property type="entry name" value="Glutathione synthetase ATP-binding domain-like"/>
    <property type="match status" value="1"/>
</dbReference>
<dbReference type="SUPFAM" id="SSF52440">
    <property type="entry name" value="PreATP-grasp domain"/>
    <property type="match status" value="1"/>
</dbReference>
<dbReference type="SUPFAM" id="SSF51246">
    <property type="entry name" value="Rudiment single hybrid motif"/>
    <property type="match status" value="1"/>
</dbReference>
<dbReference type="PROSITE" id="PS50975">
    <property type="entry name" value="ATP_GRASP"/>
    <property type="match status" value="1"/>
</dbReference>